<evidence type="ECO:0000255" key="1">
    <source>
        <dbReference type="PROSITE-ProRule" id="PRU00028"/>
    </source>
</evidence>
<evidence type="ECO:0000256" key="2">
    <source>
        <dbReference type="SAM" id="MobiDB-lite"/>
    </source>
</evidence>
<evidence type="ECO:0000269" key="3">
    <source>
    </source>
</evidence>
<evidence type="ECO:0000303" key="4">
    <source>
    </source>
</evidence>
<evidence type="ECO:0000305" key="5"/>
<evidence type="ECO:0000312" key="6">
    <source>
        <dbReference type="Proteomes" id="UP000008144"/>
    </source>
</evidence>
<evidence type="ECO:0007744" key="7">
    <source>
        <dbReference type="PDB" id="2BV2"/>
    </source>
</evidence>
<evidence type="ECO:0007829" key="8">
    <source>
        <dbReference type="PDB" id="2BV2"/>
    </source>
</evidence>
<organism evidence="6">
    <name type="scientific">Ciona intestinalis</name>
    <name type="common">Transparent sea squirt</name>
    <name type="synonym">Ascidia intestinalis</name>
    <dbReference type="NCBI Taxonomy" id="7719"/>
    <lineage>
        <taxon>Eukaryota</taxon>
        <taxon>Metazoa</taxon>
        <taxon>Chordata</taxon>
        <taxon>Tunicata</taxon>
        <taxon>Ascidiacea</taxon>
        <taxon>Phlebobranchia</taxon>
        <taxon>Cionidae</taxon>
        <taxon>Ciona</taxon>
    </lineage>
</organism>
<gene>
    <name evidence="4" type="primary">Ci-bg-crystallin</name>
</gene>
<reference evidence="6" key="1">
    <citation type="journal article" date="2002" name="Science">
        <title>The draft genome of Ciona intestinalis: insights into chordate and vertebrate origins.</title>
        <authorList>
            <person name="Dehal P."/>
            <person name="Satou Y."/>
            <person name="Campbell R.K."/>
            <person name="Chapman J."/>
            <person name="Degnan B."/>
            <person name="De Tomaso A."/>
            <person name="Davidson B."/>
            <person name="Di Gregorio A."/>
            <person name="Gelpke M."/>
            <person name="Goodstein D.M."/>
            <person name="Harafuji N."/>
            <person name="Hastings K.E."/>
            <person name="Ho I."/>
            <person name="Hotta K."/>
            <person name="Huang W."/>
            <person name="Kawashima T."/>
            <person name="Lemaire P."/>
            <person name="Martinez D."/>
            <person name="Meinertzhagen I.A."/>
            <person name="Necula S."/>
            <person name="Nonaka M."/>
            <person name="Putnam N."/>
            <person name="Rash S."/>
            <person name="Saiga H."/>
            <person name="Satake M."/>
            <person name="Terry A."/>
            <person name="Yamada L."/>
            <person name="Wang H.G."/>
            <person name="Awazu S."/>
            <person name="Azumi K."/>
            <person name="Boore J."/>
            <person name="Branno M."/>
            <person name="Chin-Bow S."/>
            <person name="DeSantis R."/>
            <person name="Doyle S."/>
            <person name="Francino P."/>
            <person name="Keys D.N."/>
            <person name="Haga S."/>
            <person name="Hayashi H."/>
            <person name="Hino K."/>
            <person name="Imai K.S."/>
            <person name="Inaba K."/>
            <person name="Kano S."/>
            <person name="Kobayashi K."/>
            <person name="Kobayashi M."/>
            <person name="Lee B.I."/>
            <person name="Makabe K.W."/>
            <person name="Manohar C."/>
            <person name="Matassi G."/>
            <person name="Medina M."/>
            <person name="Mochizuki Y."/>
            <person name="Mount S."/>
            <person name="Morishita T."/>
            <person name="Miura S."/>
            <person name="Nakayama A."/>
            <person name="Nishizaka S."/>
            <person name="Nomoto H."/>
            <person name="Ohta F."/>
            <person name="Oishi K."/>
            <person name="Rigoutsos I."/>
            <person name="Sano M."/>
            <person name="Sasaki A."/>
            <person name="Sasakura Y."/>
            <person name="Shoguchi E."/>
            <person name="Shin-i T."/>
            <person name="Spagnuolo A."/>
            <person name="Stainier D."/>
            <person name="Suzuki M.M."/>
            <person name="Tassy O."/>
            <person name="Takatori N."/>
            <person name="Tokuoka M."/>
            <person name="Yagi K."/>
            <person name="Yoshizaki F."/>
            <person name="Wada S."/>
            <person name="Zhang C."/>
            <person name="Hyatt P.D."/>
            <person name="Larimer F."/>
            <person name="Detter C."/>
            <person name="Doggett N."/>
            <person name="Glavina T."/>
            <person name="Hawkins T."/>
            <person name="Richardson P."/>
            <person name="Lucas S."/>
            <person name="Kohara Y."/>
            <person name="Levine M."/>
            <person name="Satoh N."/>
            <person name="Rokhsar D.S."/>
        </authorList>
    </citation>
    <scope>NUCLEOTIDE SEQUENCE [LARGE SCALE GENOMIC DNA]</scope>
</reference>
<reference evidence="7" key="2">
    <citation type="journal article" date="2005" name="Curr. Biol.">
        <title>Urochordate betagamma-crystallin and the evolutionary origin of the vertebrate eye lens.</title>
        <authorList>
            <person name="Shimeld S.M."/>
            <person name="Purkiss A.G."/>
            <person name="Dirks R.P."/>
            <person name="Bateman O.A."/>
            <person name="Slingsby C."/>
            <person name="Lubsen N.H."/>
        </authorList>
    </citation>
    <scope>X-RAY CRYSTALLOGRAPHY (1.55 ANGSTROMS) OF 2-84</scope>
    <scope>FUNCTION</scope>
    <scope>SUBUNIT</scope>
    <scope>TISSUE SPECIFICITY</scope>
    <scope>DOMAIN</scope>
</reference>
<sequence>MGKIILFEDVEFGGKKLELETSVSDLNVHGFNDIVSSIIVESGTWFVFDDEGFSGPSYKLTPGKYPNPGSWGGNDDELSSVKQQ</sequence>
<dbReference type="PDB" id="2BV2">
    <property type="method" value="X-ray"/>
    <property type="resolution" value="1.55 A"/>
    <property type="chains" value="A=2-84"/>
</dbReference>
<dbReference type="PDBsum" id="2BV2"/>
<dbReference type="PCDDB" id="F6Q2R9"/>
<dbReference type="SMR" id="F6Q2R9"/>
<dbReference type="STRING" id="7719.ENSCINP00000001342"/>
<dbReference type="Ensembl" id="ENSCINT00000001342.3">
    <property type="protein sequence ID" value="ENSCINP00000001342.3"/>
    <property type="gene ID" value="ENSCING00000000732.3"/>
</dbReference>
<dbReference type="KEGG" id="cin:100175621"/>
<dbReference type="HOGENOM" id="CLU_2526791_0_0_1"/>
<dbReference type="InParanoid" id="F6Q2R9"/>
<dbReference type="OrthoDB" id="8407241at2759"/>
<dbReference type="Proteomes" id="UP000008144">
    <property type="component" value="Unassembled WGS sequence"/>
</dbReference>
<dbReference type="Gene3D" id="2.60.20.10">
    <property type="entry name" value="Crystallins"/>
    <property type="match status" value="1"/>
</dbReference>
<dbReference type="InterPro" id="IPR050252">
    <property type="entry name" value="Beta/Gamma-Crystallin"/>
</dbReference>
<dbReference type="InterPro" id="IPR001064">
    <property type="entry name" value="Beta/gamma_crystallin"/>
</dbReference>
<dbReference type="InterPro" id="IPR011024">
    <property type="entry name" value="G_crystallin-like"/>
</dbReference>
<dbReference type="PANTHER" id="PTHR11818">
    <property type="entry name" value="BETA/GAMMA CRYSTALLIN"/>
    <property type="match status" value="1"/>
</dbReference>
<dbReference type="PANTHER" id="PTHR11818:SF42">
    <property type="entry name" value="VOLTAGE-GATED HYDROGEN CHANNEL 1"/>
    <property type="match status" value="1"/>
</dbReference>
<dbReference type="Pfam" id="PF00030">
    <property type="entry name" value="Crystall"/>
    <property type="match status" value="1"/>
</dbReference>
<dbReference type="SMART" id="SM00247">
    <property type="entry name" value="XTALbg"/>
    <property type="match status" value="1"/>
</dbReference>
<dbReference type="SUPFAM" id="SSF49695">
    <property type="entry name" value="gamma-Crystallin-like"/>
    <property type="match status" value="1"/>
</dbReference>
<dbReference type="PROSITE" id="PS50915">
    <property type="entry name" value="CRYSTALLIN_BETA_GAMMA"/>
    <property type="match status" value="2"/>
</dbReference>
<proteinExistence type="evidence at protein level"/>
<comment type="function">
    <text evidence="3">Structural component of the neuroectodermal visual system.</text>
</comment>
<comment type="subunit">
    <text evidence="3">Monomer.</text>
</comment>
<comment type="tissue specificity">
    <text evidence="3">Palps of larvae and otolith of the light-sensing ocellus.</text>
</comment>
<comment type="domain">
    <text evidence="3">Has a single-domain beta-structure, folded into two very similar Greek key motifs.</text>
</comment>
<comment type="similarity">
    <text evidence="5">Belongs to the beta/gamma-crystallin family.</text>
</comment>
<protein>
    <recommendedName>
        <fullName evidence="4">Beta/gamma-crystallin</fullName>
    </recommendedName>
</protein>
<feature type="chain" id="PRO_0000461584" description="Beta/gamma-crystallin">
    <location>
        <begin position="1"/>
        <end position="84"/>
    </location>
</feature>
<feature type="domain" description="Beta/gamma crystallin 'Greek key' 1" evidence="1">
    <location>
        <begin position="2"/>
        <end position="42"/>
    </location>
</feature>
<feature type="domain" description="Beta/gamma crystallin 'Greek key' 2" evidence="1">
    <location>
        <begin position="43"/>
        <end position="84"/>
    </location>
</feature>
<feature type="region of interest" description="Disordered" evidence="2">
    <location>
        <begin position="64"/>
        <end position="84"/>
    </location>
</feature>
<feature type="strand" evidence="8">
    <location>
        <begin position="3"/>
        <end position="9"/>
    </location>
</feature>
<feature type="helix" evidence="8">
    <location>
        <begin position="10"/>
        <end position="12"/>
    </location>
</feature>
<feature type="strand" evidence="8">
    <location>
        <begin position="16"/>
        <end position="21"/>
    </location>
</feature>
<feature type="helix" evidence="8">
    <location>
        <begin position="26"/>
        <end position="29"/>
    </location>
</feature>
<feature type="strand" evidence="8">
    <location>
        <begin position="37"/>
        <end position="43"/>
    </location>
</feature>
<feature type="strand" evidence="8">
    <location>
        <begin position="45"/>
        <end position="50"/>
    </location>
</feature>
<feature type="turn" evidence="8">
    <location>
        <begin position="51"/>
        <end position="53"/>
    </location>
</feature>
<feature type="strand" evidence="8">
    <location>
        <begin position="54"/>
        <end position="60"/>
    </location>
</feature>
<feature type="strand" evidence="8">
    <location>
        <begin position="62"/>
        <end position="65"/>
    </location>
</feature>
<feature type="helix" evidence="8">
    <location>
        <begin position="68"/>
        <end position="71"/>
    </location>
</feature>
<feature type="strand" evidence="8">
    <location>
        <begin position="80"/>
        <end position="83"/>
    </location>
</feature>
<accession>F6Q2R9</accession>
<accession>A0A1W2WFU1</accession>
<keyword id="KW-0002">3D-structure</keyword>
<keyword id="KW-1185">Reference proteome</keyword>
<keyword id="KW-0677">Repeat</keyword>
<name>CRYBG_CIOIN</name>